<comment type="subunit">
    <text evidence="1">Homodimer and heterodimers.</text>
</comment>
<comment type="subcellular location">
    <subcellularLocation>
        <location evidence="1">Cell membrane</location>
        <topology evidence="1">Multi-pass membrane protein</topology>
    </subcellularLocation>
</comment>
<comment type="similarity">
    <text evidence="3">Belongs to the Casparian strip membrane proteins (CASP) family.</text>
</comment>
<gene>
    <name type="ORF">PtaqContig8469</name>
</gene>
<protein>
    <recommendedName>
        <fullName>CASP-like protein 3A1</fullName>
        <shortName>PaCASPL3A1</shortName>
    </recommendedName>
</protein>
<dbReference type="GO" id="GO:0005886">
    <property type="term" value="C:plasma membrane"/>
    <property type="evidence" value="ECO:0007669"/>
    <property type="project" value="UniProtKB-SubCell"/>
</dbReference>
<dbReference type="InterPro" id="IPR006459">
    <property type="entry name" value="CASP/CASPL"/>
</dbReference>
<dbReference type="InterPro" id="IPR006702">
    <property type="entry name" value="CASP_dom"/>
</dbReference>
<dbReference type="NCBIfam" id="TIGR01569">
    <property type="entry name" value="A_tha_TIGR01569"/>
    <property type="match status" value="1"/>
</dbReference>
<dbReference type="PANTHER" id="PTHR33573:SF48">
    <property type="entry name" value="CASP-LIKE PROTEIN 3A1"/>
    <property type="match status" value="1"/>
</dbReference>
<dbReference type="PANTHER" id="PTHR33573">
    <property type="entry name" value="CASP-LIKE PROTEIN 4A4"/>
    <property type="match status" value="1"/>
</dbReference>
<dbReference type="Pfam" id="PF04535">
    <property type="entry name" value="CASP_dom"/>
    <property type="match status" value="1"/>
</dbReference>
<sequence>MVDIALRSAVVAFMVVSLSAMFTSTQHSEVHIIGFSIPVSLRWNRSQPFEFLVVVELLICAYAFVQFVYQSVVLAKNAVPTRRCIWVQLAADQVCAYLVLAAAAAAAGASRTNKSGFQSLGMQNIKVPGVCIVLDKFCNRATIAIIFTLLAAGASGISVTLDVYMLTLTYYMG</sequence>
<reference key="1">
    <citation type="journal article" date="2011" name="BMC Genomics">
        <title>De novo characterization of the gametophyte transcriptome in bracken fern, Pteridium aquilinum.</title>
        <authorList>
            <person name="Der J.P."/>
            <person name="Barker M.S."/>
            <person name="Wickett N.J."/>
            <person name="dePamphilis C.W."/>
            <person name="Wolf P.G."/>
        </authorList>
    </citation>
    <scope>NUCLEOTIDE SEQUENCE [LARGE SCALE MRNA]</scope>
    <source>
        <strain>Wolf 83</strain>
        <tissue>Gametophyte</tissue>
    </source>
</reference>
<reference key="2">
    <citation type="journal article" date="2014" name="Plant Physiol.">
        <title>Functional and evolutionary analysis of the CASPARIAN STRIP MEMBRANE DOMAIN PROTEIN family.</title>
        <authorList>
            <person name="Roppolo D."/>
            <person name="Boeckmann B."/>
            <person name="Pfister A."/>
            <person name="Boutet E."/>
            <person name="Rubio M.C."/>
            <person name="Denervaud-Tendon V."/>
            <person name="Vermeer J.E."/>
            <person name="Gheyselinck J."/>
            <person name="Xenarios I."/>
            <person name="Geldner N."/>
        </authorList>
    </citation>
    <scope>GENE FAMILY</scope>
    <scope>NOMENCLATURE</scope>
</reference>
<feature type="chain" id="PRO_0000417798" description="CASP-like protein 3A1">
    <location>
        <begin position="1"/>
        <end position="173"/>
    </location>
</feature>
<feature type="topological domain" description="Cytoplasmic" evidence="2">
    <location>
        <position position="1"/>
    </location>
</feature>
<feature type="transmembrane region" description="Helical" evidence="2">
    <location>
        <begin position="2"/>
        <end position="22"/>
    </location>
</feature>
<feature type="topological domain" description="Extracellular" evidence="2">
    <location>
        <begin position="23"/>
        <end position="48"/>
    </location>
</feature>
<feature type="transmembrane region" description="Helical" evidence="2">
    <location>
        <begin position="49"/>
        <end position="69"/>
    </location>
</feature>
<feature type="topological domain" description="Cytoplasmic" evidence="2">
    <location>
        <begin position="70"/>
        <end position="84"/>
    </location>
</feature>
<feature type="transmembrane region" description="Helical" evidence="2">
    <location>
        <begin position="85"/>
        <end position="105"/>
    </location>
</feature>
<feature type="topological domain" description="Extracellular" evidence="2">
    <location>
        <begin position="106"/>
        <end position="140"/>
    </location>
</feature>
<feature type="transmembrane region" description="Helical" evidence="2">
    <location>
        <begin position="141"/>
        <end position="161"/>
    </location>
</feature>
<feature type="topological domain" description="Cytoplasmic" evidence="2">
    <location>
        <begin position="162"/>
        <end position="173"/>
    </location>
</feature>
<feature type="glycosylation site" description="N-linked (GlcNAc...) asparagine" evidence="2">
    <location>
        <position position="44"/>
    </location>
</feature>
<feature type="glycosylation site" description="N-linked (GlcNAc...) asparagine" evidence="2">
    <location>
        <position position="113"/>
    </location>
</feature>
<proteinExistence type="inferred from homology"/>
<name>CSPL5_PTEAA</name>
<evidence type="ECO:0000250" key="1"/>
<evidence type="ECO:0000255" key="2"/>
<evidence type="ECO:0000305" key="3"/>
<accession>P0DI26</accession>
<organism>
    <name type="scientific">Pteridium aquilinum subsp. aquilinum</name>
    <name type="common">Bracken fern</name>
    <dbReference type="NCBI Taxonomy" id="104588"/>
    <lineage>
        <taxon>Eukaryota</taxon>
        <taxon>Viridiplantae</taxon>
        <taxon>Streptophyta</taxon>
        <taxon>Embryophyta</taxon>
        <taxon>Tracheophyta</taxon>
        <taxon>Polypodiopsida</taxon>
        <taxon>Polypodiidae</taxon>
        <taxon>Polypodiales</taxon>
        <taxon>Dennstaedtiineae</taxon>
        <taxon>Dennstaedtiaceae</taxon>
        <taxon>Pteridium</taxon>
    </lineage>
</organism>
<keyword id="KW-1003">Cell membrane</keyword>
<keyword id="KW-0325">Glycoprotein</keyword>
<keyword id="KW-0472">Membrane</keyword>
<keyword id="KW-0812">Transmembrane</keyword>
<keyword id="KW-1133">Transmembrane helix</keyword>